<organism>
    <name type="scientific">Anaeromyxobacter sp. (strain Fw109-5)</name>
    <dbReference type="NCBI Taxonomy" id="404589"/>
    <lineage>
        <taxon>Bacteria</taxon>
        <taxon>Pseudomonadati</taxon>
        <taxon>Myxococcota</taxon>
        <taxon>Myxococcia</taxon>
        <taxon>Myxococcales</taxon>
        <taxon>Cystobacterineae</taxon>
        <taxon>Anaeromyxobacteraceae</taxon>
        <taxon>Anaeromyxobacter</taxon>
    </lineage>
</organism>
<proteinExistence type="inferred from homology"/>
<comment type="function">
    <text evidence="1">Transfers the gamma-phosphate of ATP to the 4'-position of a tetraacyldisaccharide 1-phosphate intermediate (termed DS-1-P) to form tetraacyldisaccharide 1,4'-bis-phosphate (lipid IVA).</text>
</comment>
<comment type="catalytic activity">
    <reaction evidence="1">
        <text>a lipid A disaccharide + ATP = a lipid IVA + ADP + H(+)</text>
        <dbReference type="Rhea" id="RHEA:67840"/>
        <dbReference type="ChEBI" id="CHEBI:15378"/>
        <dbReference type="ChEBI" id="CHEBI:30616"/>
        <dbReference type="ChEBI" id="CHEBI:176343"/>
        <dbReference type="ChEBI" id="CHEBI:176425"/>
        <dbReference type="ChEBI" id="CHEBI:456216"/>
        <dbReference type="EC" id="2.7.1.130"/>
    </reaction>
</comment>
<comment type="pathway">
    <text evidence="1">Glycolipid biosynthesis; lipid IV(A) biosynthesis; lipid IV(A) from (3R)-3-hydroxytetradecanoyl-[acyl-carrier-protein] and UDP-N-acetyl-alpha-D-glucosamine: step 6/6.</text>
</comment>
<comment type="similarity">
    <text evidence="1">Belongs to the LpxK family.</text>
</comment>
<sequence length="371" mass="38431">MSVVERIWWGHRAAPGEAVLLAPLLLAEGLFRAGAAARGALYDSGLLAQARAGVPVISIGNVAVGGAGKTPAAIAVSARLAARGRRVAVLSRGYGASRRDARVVSDGAHVLLGAGEAGDEPALLARRLPGVAVLCGPRRAALAATAVTTLGADALVLDDGFQHRALARDLDVVVLDAANPFGNGHLLPRGPNREPRAALRRAGLVWLSRVDQADEVALEALRALALEATGRAPVESRHAPVDVVDGTLARSLGREALRGARVLALSGLARPGAFRRTLADLGAEVVGERAFPDHHRFTDRELDEALRAAEAAGARAVTTEKDAVRLAPARAADPRLCAVRIDAELVRGEDHLAQSLDAALARGDVLSRSAG</sequence>
<gene>
    <name evidence="1" type="primary">lpxK</name>
    <name type="ordered locus">Anae109_2580</name>
</gene>
<evidence type="ECO:0000255" key="1">
    <source>
        <dbReference type="HAMAP-Rule" id="MF_00409"/>
    </source>
</evidence>
<name>LPXK_ANADF</name>
<reference key="1">
    <citation type="journal article" date="2015" name="Genome Announc.">
        <title>Complete genome sequence of Anaeromyxobacter sp. Fw109-5, an anaerobic, metal-reducing bacterium isolated from a contaminated subsurface environment.</title>
        <authorList>
            <person name="Hwang C."/>
            <person name="Copeland A."/>
            <person name="Lucas S."/>
            <person name="Lapidus A."/>
            <person name="Barry K."/>
            <person name="Glavina Del Rio T."/>
            <person name="Dalin E."/>
            <person name="Tice H."/>
            <person name="Pitluck S."/>
            <person name="Sims D."/>
            <person name="Brettin T."/>
            <person name="Bruce D.C."/>
            <person name="Detter J.C."/>
            <person name="Han C.S."/>
            <person name="Schmutz J."/>
            <person name="Larimer F.W."/>
            <person name="Land M.L."/>
            <person name="Hauser L.J."/>
            <person name="Kyrpides N."/>
            <person name="Lykidis A."/>
            <person name="Richardson P."/>
            <person name="Belieav A."/>
            <person name="Sanford R.A."/>
            <person name="Loeffler F.E."/>
            <person name="Fields M.W."/>
        </authorList>
    </citation>
    <scope>NUCLEOTIDE SEQUENCE [LARGE SCALE GENOMIC DNA]</scope>
    <source>
        <strain>Fw109-5</strain>
    </source>
</reference>
<feature type="chain" id="PRO_1000049888" description="Tetraacyldisaccharide 4'-kinase">
    <location>
        <begin position="1"/>
        <end position="371"/>
    </location>
</feature>
<feature type="binding site" evidence="1">
    <location>
        <begin position="63"/>
        <end position="70"/>
    </location>
    <ligand>
        <name>ATP</name>
        <dbReference type="ChEBI" id="CHEBI:30616"/>
    </ligand>
</feature>
<protein>
    <recommendedName>
        <fullName evidence="1">Tetraacyldisaccharide 4'-kinase</fullName>
        <ecNumber evidence="1">2.7.1.130</ecNumber>
    </recommendedName>
    <alternativeName>
        <fullName evidence="1">Lipid A 4'-kinase</fullName>
    </alternativeName>
</protein>
<keyword id="KW-0067">ATP-binding</keyword>
<keyword id="KW-0418">Kinase</keyword>
<keyword id="KW-0441">Lipid A biosynthesis</keyword>
<keyword id="KW-0444">Lipid biosynthesis</keyword>
<keyword id="KW-0443">Lipid metabolism</keyword>
<keyword id="KW-0547">Nucleotide-binding</keyword>
<keyword id="KW-1185">Reference proteome</keyword>
<keyword id="KW-0808">Transferase</keyword>
<accession>A7HDI5</accession>
<dbReference type="EC" id="2.7.1.130" evidence="1"/>
<dbReference type="EMBL" id="CP000769">
    <property type="protein sequence ID" value="ABS26781.1"/>
    <property type="molecule type" value="Genomic_DNA"/>
</dbReference>
<dbReference type="RefSeq" id="WP_012097375.1">
    <property type="nucleotide sequence ID" value="NC_009675.1"/>
</dbReference>
<dbReference type="SMR" id="A7HDI5"/>
<dbReference type="STRING" id="404589.Anae109_2580"/>
<dbReference type="KEGG" id="afw:Anae109_2580"/>
<dbReference type="eggNOG" id="COG1663">
    <property type="taxonomic scope" value="Bacteria"/>
</dbReference>
<dbReference type="HOGENOM" id="CLU_038816_6_0_7"/>
<dbReference type="OrthoDB" id="9766423at2"/>
<dbReference type="UniPathway" id="UPA00359">
    <property type="reaction ID" value="UER00482"/>
</dbReference>
<dbReference type="Proteomes" id="UP000006382">
    <property type="component" value="Chromosome"/>
</dbReference>
<dbReference type="GO" id="GO:0005886">
    <property type="term" value="C:plasma membrane"/>
    <property type="evidence" value="ECO:0007669"/>
    <property type="project" value="TreeGrafter"/>
</dbReference>
<dbReference type="GO" id="GO:0005524">
    <property type="term" value="F:ATP binding"/>
    <property type="evidence" value="ECO:0007669"/>
    <property type="project" value="UniProtKB-UniRule"/>
</dbReference>
<dbReference type="GO" id="GO:0009029">
    <property type="term" value="F:tetraacyldisaccharide 4'-kinase activity"/>
    <property type="evidence" value="ECO:0007669"/>
    <property type="project" value="UniProtKB-UniRule"/>
</dbReference>
<dbReference type="GO" id="GO:0009245">
    <property type="term" value="P:lipid A biosynthetic process"/>
    <property type="evidence" value="ECO:0007669"/>
    <property type="project" value="UniProtKB-UniRule"/>
</dbReference>
<dbReference type="GO" id="GO:0009244">
    <property type="term" value="P:lipopolysaccharide core region biosynthetic process"/>
    <property type="evidence" value="ECO:0007669"/>
    <property type="project" value="TreeGrafter"/>
</dbReference>
<dbReference type="Gene3D" id="3.40.50.300">
    <property type="entry name" value="P-loop containing nucleotide triphosphate hydrolases"/>
    <property type="match status" value="1"/>
</dbReference>
<dbReference type="HAMAP" id="MF_00409">
    <property type="entry name" value="LpxK"/>
    <property type="match status" value="1"/>
</dbReference>
<dbReference type="InterPro" id="IPR003758">
    <property type="entry name" value="LpxK"/>
</dbReference>
<dbReference type="InterPro" id="IPR027417">
    <property type="entry name" value="P-loop_NTPase"/>
</dbReference>
<dbReference type="NCBIfam" id="TIGR00682">
    <property type="entry name" value="lpxK"/>
    <property type="match status" value="1"/>
</dbReference>
<dbReference type="PANTHER" id="PTHR42724">
    <property type="entry name" value="TETRAACYLDISACCHARIDE 4'-KINASE"/>
    <property type="match status" value="1"/>
</dbReference>
<dbReference type="PANTHER" id="PTHR42724:SF1">
    <property type="entry name" value="TETRAACYLDISACCHARIDE 4'-KINASE, MITOCHONDRIAL-RELATED"/>
    <property type="match status" value="1"/>
</dbReference>
<dbReference type="Pfam" id="PF02606">
    <property type="entry name" value="LpxK"/>
    <property type="match status" value="1"/>
</dbReference>
<dbReference type="SUPFAM" id="SSF52540">
    <property type="entry name" value="P-loop containing nucleoside triphosphate hydrolases"/>
    <property type="match status" value="1"/>
</dbReference>